<name>RMF_HAHCH</name>
<feature type="chain" id="PRO_0000416473" description="Ribosome modulation factor">
    <location>
        <begin position="1"/>
        <end position="69"/>
    </location>
</feature>
<protein>
    <recommendedName>
        <fullName evidence="1">Ribosome modulation factor</fullName>
        <shortName evidence="1">RMF</shortName>
    </recommendedName>
</protein>
<reference key="1">
    <citation type="journal article" date="2005" name="Nucleic Acids Res.">
        <title>Genomic blueprint of Hahella chejuensis, a marine microbe producing an algicidal agent.</title>
        <authorList>
            <person name="Jeong H."/>
            <person name="Yim J.H."/>
            <person name="Lee C."/>
            <person name="Choi S.-H."/>
            <person name="Park Y.K."/>
            <person name="Yoon S.H."/>
            <person name="Hur C.-G."/>
            <person name="Kang H.-Y."/>
            <person name="Kim D."/>
            <person name="Lee H.H."/>
            <person name="Park K.H."/>
            <person name="Park S.-H."/>
            <person name="Park H.-S."/>
            <person name="Lee H.K."/>
            <person name="Oh T.K."/>
            <person name="Kim J.F."/>
        </authorList>
    </citation>
    <scope>NUCLEOTIDE SEQUENCE [LARGE SCALE GENOMIC DNA]</scope>
    <source>
        <strain>KCTC 2396</strain>
    </source>
</reference>
<gene>
    <name evidence="1" type="primary">rmf</name>
    <name type="ordered locus">HCH_10018</name>
</gene>
<dbReference type="EMBL" id="CP000155">
    <property type="protein sequence ID" value="ABC31654.1"/>
    <property type="molecule type" value="Genomic_DNA"/>
</dbReference>
<dbReference type="SMR" id="Q2SCH0"/>
<dbReference type="STRING" id="349521.HCH_10018"/>
<dbReference type="KEGG" id="hch:HCH_10018"/>
<dbReference type="eggNOG" id="COG3130">
    <property type="taxonomic scope" value="Bacteria"/>
</dbReference>
<dbReference type="HOGENOM" id="CLU_203350_0_0_6"/>
<dbReference type="OrthoDB" id="5917763at2"/>
<dbReference type="Proteomes" id="UP000000238">
    <property type="component" value="Chromosome"/>
</dbReference>
<dbReference type="GO" id="GO:0005737">
    <property type="term" value="C:cytoplasm"/>
    <property type="evidence" value="ECO:0007669"/>
    <property type="project" value="UniProtKB-SubCell"/>
</dbReference>
<dbReference type="GO" id="GO:0006417">
    <property type="term" value="P:regulation of translation"/>
    <property type="evidence" value="ECO:0007669"/>
    <property type="project" value="UniProtKB-UniRule"/>
</dbReference>
<dbReference type="Gene3D" id="1.10.10.620">
    <property type="entry name" value="ribosome modulation factor like domain"/>
    <property type="match status" value="1"/>
</dbReference>
<dbReference type="HAMAP" id="MF_00919">
    <property type="entry name" value="RMF"/>
    <property type="match status" value="1"/>
</dbReference>
<dbReference type="InterPro" id="IPR007040">
    <property type="entry name" value="Ribosome_modulation_factor"/>
</dbReference>
<dbReference type="InterPro" id="IPR023200">
    <property type="entry name" value="RMF_sf"/>
</dbReference>
<dbReference type="NCBIfam" id="NF011162">
    <property type="entry name" value="PRK14563.1"/>
    <property type="match status" value="1"/>
</dbReference>
<dbReference type="NCBIfam" id="NF041886">
    <property type="entry name" value="Rmf_CrpP_fam"/>
    <property type="match status" value="1"/>
</dbReference>
<dbReference type="Pfam" id="PF04957">
    <property type="entry name" value="RMF"/>
    <property type="match status" value="1"/>
</dbReference>
<keyword id="KW-0963">Cytoplasm</keyword>
<keyword id="KW-1185">Reference proteome</keyword>
<keyword id="KW-0810">Translation regulation</keyword>
<accession>Q2SCH0</accession>
<evidence type="ECO:0000255" key="1">
    <source>
        <dbReference type="HAMAP-Rule" id="MF_00919"/>
    </source>
</evidence>
<organism>
    <name type="scientific">Hahella chejuensis (strain KCTC 2396)</name>
    <dbReference type="NCBI Taxonomy" id="349521"/>
    <lineage>
        <taxon>Bacteria</taxon>
        <taxon>Pseudomonadati</taxon>
        <taxon>Pseudomonadota</taxon>
        <taxon>Gammaproteobacteria</taxon>
        <taxon>Oceanospirillales</taxon>
        <taxon>Hahellaceae</taxon>
        <taxon>Hahella</taxon>
    </lineage>
</organism>
<sequence>MRRQKRDMFERAYLKGYRAGVSGRSKDLCPAANPQMRQEWINGWRDGRADHWDGYTGVSGIHRSPGIAS</sequence>
<proteinExistence type="inferred from homology"/>
<comment type="function">
    <text evidence="1">During stationary phase, converts 70S ribosomes to an inactive dimeric form (100S ribosomes).</text>
</comment>
<comment type="subcellular location">
    <subcellularLocation>
        <location evidence="1">Cytoplasm</location>
    </subcellularLocation>
</comment>
<comment type="similarity">
    <text evidence="1">Belongs to the ribosome modulation factor family.</text>
</comment>